<reference key="1">
    <citation type="submission" date="2008-03" db="EMBL/GenBank/DDBJ databases">
        <authorList>
            <consortium name="NIH - Xenopus Gene Collection (XGC) project"/>
        </authorList>
    </citation>
    <scope>NUCLEOTIDE SEQUENCE [LARGE SCALE MRNA]</scope>
    <source>
        <tissue>Testis</tissue>
    </source>
</reference>
<sequence>MEANAGDEGIHFQNYPFDFLEFLNHQRFEPMELYNHHEHAKAVAALPCAPPQYEYNHQTQPNHVQFASTSTSKPKEFKVEAPPSSSLSPSKKPDIATTQQFNNQPPITTTQTIFDSTFNAAQWGIVDLSSHQHLFNNLKRSLPVAQQLPAEDENKDDKNYFRRLKYLIDRRFPCTVCQKSFKQSSHLVQHMLVHTGERPYECNTCGRTYNHISSLIRHRRCHKEETEAEVTNSVPPPDGEAAAAAAVVAAAAAAMSEAAAGSAEMPVTGSEQSIPLPQDGPFTCTLCWKVFKKQSHLHQHQIIHTGEKPFSCSVCAKSFNRRESLKRHVKTHSDSMKVQCEVCGKSFRDTSYLLKHQATHTGERPDYKCELCGKSYAAPQSLLRHKQVHEQGLALQQPMVQQQQPLSEVIKEPTSSVTIEAASLLGTDVSNVGPAAISVIGKIGSFFSQSSLQKPPSVINNANKNFCCNVCGRGFGRRETLKRHERIHTGEKPHQCSVCGKRFRESFHLTKHHVVHTRERPYKCELCGKVFGYPQSLTRHKQIHRLQLPCTVATGTLPPDRLTFGCTDCGERFPDSFHLMNHKELHMNEKPYVCDTCGKCFGFIENLMWHKLVHQTAAERLHPISQCQDVAESQQVNCLETTAPSDVSGAEVAAAAAAAGVVASPFEEHPVVPSGERFSCSICGQSFKHFLGLVTHKYVHLVRRTLACNVCGQNFAGAYDLLLHRRTHLQKRHFTCSVCGKRFWEAALLMRHQRCHTEERPYRCTICGRGFLHSWYLRQHKVVHTGERAYKCALCNKRFAQSSSLAEHQRLHIVARPQRCPTCGKTFRYRSNLLEHQRVHLGEKVYRCDQCGKSFFYISSILRHQRSHDAKPDLRCSCCLKLFKDPKYFSKHVQTHQGGRPFKCGACGEAFSNTYGLKKHRHAHKMERLAAAAALVEGQKTL</sequence>
<keyword id="KW-0238">DNA-binding</keyword>
<keyword id="KW-0479">Metal-binding</keyword>
<keyword id="KW-0539">Nucleus</keyword>
<keyword id="KW-1185">Reference proteome</keyword>
<keyword id="KW-0677">Repeat</keyword>
<keyword id="KW-0804">Transcription</keyword>
<keyword id="KW-0805">Transcription regulation</keyword>
<keyword id="KW-0862">Zinc</keyword>
<keyword id="KW-0863">Zinc-finger</keyword>
<feature type="chain" id="PRO_0000404596" description="Zinc finger protein 865">
    <location>
        <begin position="1"/>
        <end position="942"/>
    </location>
</feature>
<feature type="zinc finger region" description="C2H2-type 1" evidence="2">
    <location>
        <begin position="172"/>
        <end position="194"/>
    </location>
</feature>
<feature type="zinc finger region" description="C2H2-type 2" evidence="2">
    <location>
        <begin position="200"/>
        <end position="222"/>
    </location>
</feature>
<feature type="zinc finger region" description="C2H2-type 3" evidence="2">
    <location>
        <begin position="282"/>
        <end position="304"/>
    </location>
</feature>
<feature type="zinc finger region" description="C2H2-type 4" evidence="2">
    <location>
        <begin position="310"/>
        <end position="332"/>
    </location>
</feature>
<feature type="zinc finger region" description="C2H2-type 5" evidence="2">
    <location>
        <begin position="338"/>
        <end position="360"/>
    </location>
</feature>
<feature type="zinc finger region" description="C2H2-type 6" evidence="2">
    <location>
        <begin position="367"/>
        <end position="389"/>
    </location>
</feature>
<feature type="zinc finger region" description="C2H2-type 7" evidence="2">
    <location>
        <begin position="466"/>
        <end position="488"/>
    </location>
</feature>
<feature type="zinc finger region" description="C2H2-type 8" evidence="2">
    <location>
        <begin position="494"/>
        <end position="516"/>
    </location>
</feature>
<feature type="zinc finger region" description="C2H2-type 9" evidence="2">
    <location>
        <begin position="522"/>
        <end position="544"/>
    </location>
</feature>
<feature type="zinc finger region" description="C2H2-type 10" evidence="2">
    <location>
        <begin position="564"/>
        <end position="586"/>
    </location>
</feature>
<feature type="zinc finger region" description="C2H2-type 11" evidence="2">
    <location>
        <begin position="592"/>
        <end position="614"/>
    </location>
</feature>
<feature type="zinc finger region" description="C2H2-type 12" evidence="2">
    <location>
        <begin position="678"/>
        <end position="700"/>
    </location>
</feature>
<feature type="zinc finger region" description="C2H2-type 13" evidence="2">
    <location>
        <begin position="706"/>
        <end position="728"/>
    </location>
</feature>
<feature type="zinc finger region" description="C2H2-type 14" evidence="2">
    <location>
        <begin position="734"/>
        <end position="756"/>
    </location>
</feature>
<feature type="zinc finger region" description="C2H2-type 15" evidence="2">
    <location>
        <begin position="762"/>
        <end position="784"/>
    </location>
</feature>
<feature type="zinc finger region" description="C2H2-type 16" evidence="2">
    <location>
        <begin position="790"/>
        <end position="812"/>
    </location>
</feature>
<feature type="zinc finger region" description="C2H2-type 17" evidence="2">
    <location>
        <begin position="818"/>
        <end position="840"/>
    </location>
</feature>
<feature type="zinc finger region" description="C2H2-type 18" evidence="2">
    <location>
        <begin position="846"/>
        <end position="868"/>
    </location>
</feature>
<feature type="zinc finger region" description="C2H2-type 19" evidence="2">
    <location>
        <begin position="874"/>
        <end position="896"/>
    </location>
</feature>
<feature type="zinc finger region" description="C2H2-type 20" evidence="2">
    <location>
        <begin position="902"/>
        <end position="924"/>
    </location>
</feature>
<feature type="region of interest" description="Disordered" evidence="3">
    <location>
        <begin position="66"/>
        <end position="106"/>
    </location>
</feature>
<feature type="compositionally biased region" description="Polar residues" evidence="3">
    <location>
        <begin position="96"/>
        <end position="106"/>
    </location>
</feature>
<accession>B1H2Q6</accession>
<dbReference type="EMBL" id="BC161090">
    <property type="protein sequence ID" value="AAI61090.1"/>
    <property type="molecule type" value="mRNA"/>
</dbReference>
<dbReference type="RefSeq" id="NP_001120386.1">
    <property type="nucleotide sequence ID" value="NM_001126914.1"/>
</dbReference>
<dbReference type="SMR" id="B1H2Q6"/>
<dbReference type="FunCoup" id="B1H2Q6">
    <property type="interactions" value="626"/>
</dbReference>
<dbReference type="PaxDb" id="8364-ENSXETP00000041502"/>
<dbReference type="GeneID" id="100145461"/>
<dbReference type="KEGG" id="xtr:100145461"/>
<dbReference type="AGR" id="Xenbase:XB-GENE-5959428"/>
<dbReference type="CTD" id="100507290"/>
<dbReference type="Xenbase" id="XB-GENE-5959428">
    <property type="gene designation" value="znf865"/>
</dbReference>
<dbReference type="eggNOG" id="KOG1721">
    <property type="taxonomic scope" value="Eukaryota"/>
</dbReference>
<dbReference type="HOGENOM" id="CLU_010472_0_0_1"/>
<dbReference type="InParanoid" id="B1H2Q6"/>
<dbReference type="OMA" id="SHKEVHM"/>
<dbReference type="OrthoDB" id="654211at2759"/>
<dbReference type="PhylomeDB" id="B1H2Q6"/>
<dbReference type="TreeFam" id="TF350857"/>
<dbReference type="Proteomes" id="UP000008143">
    <property type="component" value="Chromosome 7"/>
</dbReference>
<dbReference type="GO" id="GO:0005634">
    <property type="term" value="C:nucleus"/>
    <property type="evidence" value="ECO:0007669"/>
    <property type="project" value="UniProtKB-SubCell"/>
</dbReference>
<dbReference type="GO" id="GO:0003677">
    <property type="term" value="F:DNA binding"/>
    <property type="evidence" value="ECO:0007669"/>
    <property type="project" value="UniProtKB-KW"/>
</dbReference>
<dbReference type="GO" id="GO:0008270">
    <property type="term" value="F:zinc ion binding"/>
    <property type="evidence" value="ECO:0007669"/>
    <property type="project" value="UniProtKB-KW"/>
</dbReference>
<dbReference type="FunFam" id="3.30.160.60:FF:001155">
    <property type="entry name" value="Zinc finger 30C"/>
    <property type="match status" value="1"/>
</dbReference>
<dbReference type="FunFam" id="3.30.160.60:FF:000100">
    <property type="entry name" value="Zinc finger 45-like"/>
    <property type="match status" value="1"/>
</dbReference>
<dbReference type="FunFam" id="3.30.160.60:FF:000446">
    <property type="entry name" value="Zinc finger protein"/>
    <property type="match status" value="2"/>
</dbReference>
<dbReference type="FunFam" id="3.30.160.60:FF:000566">
    <property type="entry name" value="zinc finger protein 133 isoform X2"/>
    <property type="match status" value="1"/>
</dbReference>
<dbReference type="FunFam" id="3.30.160.60:FF:000295">
    <property type="entry name" value="zinc finger protein 19"/>
    <property type="match status" value="1"/>
</dbReference>
<dbReference type="FunFam" id="3.30.160.60:FF:001498">
    <property type="entry name" value="Zinc finger protein 404"/>
    <property type="match status" value="1"/>
</dbReference>
<dbReference type="FunFam" id="3.30.160.60:FF:000060">
    <property type="entry name" value="zinc finger protein 436"/>
    <property type="match status" value="2"/>
</dbReference>
<dbReference type="FunFam" id="3.30.160.60:FF:000340">
    <property type="entry name" value="zinc finger protein 473 isoform X1"/>
    <property type="match status" value="1"/>
</dbReference>
<dbReference type="FunFam" id="3.30.160.60:FF:000145">
    <property type="entry name" value="Zinc finger protein 574"/>
    <property type="match status" value="1"/>
</dbReference>
<dbReference type="FunFam" id="3.30.160.60:FF:000624">
    <property type="entry name" value="zinc finger protein 697"/>
    <property type="match status" value="2"/>
</dbReference>
<dbReference type="FunFam" id="3.30.160.60:FF:000634">
    <property type="entry name" value="Zinc finger X-chromosomal protein"/>
    <property type="match status" value="1"/>
</dbReference>
<dbReference type="Gene3D" id="3.30.160.60">
    <property type="entry name" value="Classic Zinc Finger"/>
    <property type="match status" value="18"/>
</dbReference>
<dbReference type="InterPro" id="IPR036236">
    <property type="entry name" value="Znf_C2H2_sf"/>
</dbReference>
<dbReference type="InterPro" id="IPR013087">
    <property type="entry name" value="Znf_C2H2_type"/>
</dbReference>
<dbReference type="PANTHER" id="PTHR24393:SF15">
    <property type="entry name" value="IP01243P-RELATED"/>
    <property type="match status" value="1"/>
</dbReference>
<dbReference type="PANTHER" id="PTHR24393">
    <property type="entry name" value="ZINC FINGER PROTEIN"/>
    <property type="match status" value="1"/>
</dbReference>
<dbReference type="Pfam" id="PF00096">
    <property type="entry name" value="zf-C2H2"/>
    <property type="match status" value="12"/>
</dbReference>
<dbReference type="Pfam" id="PF13912">
    <property type="entry name" value="zf-C2H2_6"/>
    <property type="match status" value="1"/>
</dbReference>
<dbReference type="SMART" id="SM00355">
    <property type="entry name" value="ZnF_C2H2"/>
    <property type="match status" value="20"/>
</dbReference>
<dbReference type="SUPFAM" id="SSF57667">
    <property type="entry name" value="beta-beta-alpha zinc fingers"/>
    <property type="match status" value="11"/>
</dbReference>
<dbReference type="PROSITE" id="PS00028">
    <property type="entry name" value="ZINC_FINGER_C2H2_1"/>
    <property type="match status" value="20"/>
</dbReference>
<dbReference type="PROSITE" id="PS50157">
    <property type="entry name" value="ZINC_FINGER_C2H2_2"/>
    <property type="match status" value="20"/>
</dbReference>
<comment type="function">
    <text evidence="1">May be involved in transcriptional regulation.</text>
</comment>
<comment type="subcellular location">
    <subcellularLocation>
        <location evidence="1">Nucleus</location>
    </subcellularLocation>
</comment>
<comment type="similarity">
    <text evidence="4">Belongs to the krueppel C2H2-type zinc-finger protein family.</text>
</comment>
<organism>
    <name type="scientific">Xenopus tropicalis</name>
    <name type="common">Western clawed frog</name>
    <name type="synonym">Silurana tropicalis</name>
    <dbReference type="NCBI Taxonomy" id="8364"/>
    <lineage>
        <taxon>Eukaryota</taxon>
        <taxon>Metazoa</taxon>
        <taxon>Chordata</taxon>
        <taxon>Craniata</taxon>
        <taxon>Vertebrata</taxon>
        <taxon>Euteleostomi</taxon>
        <taxon>Amphibia</taxon>
        <taxon>Batrachia</taxon>
        <taxon>Anura</taxon>
        <taxon>Pipoidea</taxon>
        <taxon>Pipidae</taxon>
        <taxon>Xenopodinae</taxon>
        <taxon>Xenopus</taxon>
        <taxon>Silurana</taxon>
    </lineage>
</organism>
<name>ZN865_XENTR</name>
<proteinExistence type="evidence at transcript level"/>
<protein>
    <recommendedName>
        <fullName>Zinc finger protein 865</fullName>
    </recommendedName>
</protein>
<evidence type="ECO:0000250" key="1"/>
<evidence type="ECO:0000255" key="2">
    <source>
        <dbReference type="PROSITE-ProRule" id="PRU00042"/>
    </source>
</evidence>
<evidence type="ECO:0000256" key="3">
    <source>
        <dbReference type="SAM" id="MobiDB-lite"/>
    </source>
</evidence>
<evidence type="ECO:0000305" key="4"/>
<gene>
    <name type="primary">znf865</name>
</gene>